<reference key="1">
    <citation type="submission" date="2009-06" db="EMBL/GenBank/DDBJ databases">
        <title>Complete sequence of chromosome of Geopacillus sp. WCH70.</title>
        <authorList>
            <consortium name="US DOE Joint Genome Institute"/>
            <person name="Lucas S."/>
            <person name="Copeland A."/>
            <person name="Lapidus A."/>
            <person name="Glavina del Rio T."/>
            <person name="Dalin E."/>
            <person name="Tice H."/>
            <person name="Bruce D."/>
            <person name="Goodwin L."/>
            <person name="Pitluck S."/>
            <person name="Chertkov O."/>
            <person name="Brettin T."/>
            <person name="Detter J.C."/>
            <person name="Han C."/>
            <person name="Larimer F."/>
            <person name="Land M."/>
            <person name="Hauser L."/>
            <person name="Kyrpides N."/>
            <person name="Mikhailova N."/>
            <person name="Brumm P."/>
            <person name="Mead D.A."/>
            <person name="Richardson P."/>
        </authorList>
    </citation>
    <scope>NUCLEOTIDE SEQUENCE [LARGE SCALE GENOMIC DNA]</scope>
    <source>
        <strain>WCH70</strain>
    </source>
</reference>
<gene>
    <name evidence="1" type="primary">ilvC</name>
    <name type="ordered locus">GWCH70_2594</name>
</gene>
<protein>
    <recommendedName>
        <fullName evidence="1">Ketol-acid reductoisomerase (NADP(+))</fullName>
        <shortName evidence="1">KARI</shortName>
        <ecNumber evidence="1">1.1.1.86</ecNumber>
    </recommendedName>
    <alternativeName>
        <fullName evidence="1">Acetohydroxy-acid isomeroreductase</fullName>
        <shortName evidence="1">AHIR</shortName>
    </alternativeName>
    <alternativeName>
        <fullName evidence="1">Alpha-keto-beta-hydroxylacyl reductoisomerase</fullName>
    </alternativeName>
    <alternativeName>
        <fullName evidence="1">Ketol-acid reductoisomerase type 1</fullName>
    </alternativeName>
    <alternativeName>
        <fullName evidence="1">Ketol-acid reductoisomerase type I</fullName>
    </alternativeName>
</protein>
<accession>C5D5M1</accession>
<keyword id="KW-0028">Amino-acid biosynthesis</keyword>
<keyword id="KW-0100">Branched-chain amino acid biosynthesis</keyword>
<keyword id="KW-0460">Magnesium</keyword>
<keyword id="KW-0479">Metal-binding</keyword>
<keyword id="KW-0521">NADP</keyword>
<keyword id="KW-0560">Oxidoreductase</keyword>
<comment type="function">
    <text evidence="1">Involved in the biosynthesis of branched-chain amino acids (BCAA). Catalyzes an alkyl-migration followed by a ketol-acid reduction of (S)-2-acetolactate (S2AL) to yield (R)-2,3-dihydroxy-isovalerate. In the isomerase reaction, S2AL is rearranged via a Mg-dependent methyl migration to produce 3-hydroxy-3-methyl-2-ketobutyrate (HMKB). In the reductase reaction, this 2-ketoacid undergoes a metal-dependent reduction by NADPH to yield (R)-2,3-dihydroxy-isovalerate.</text>
</comment>
<comment type="catalytic activity">
    <reaction evidence="1">
        <text>(2R)-2,3-dihydroxy-3-methylbutanoate + NADP(+) = (2S)-2-acetolactate + NADPH + H(+)</text>
        <dbReference type="Rhea" id="RHEA:22068"/>
        <dbReference type="ChEBI" id="CHEBI:15378"/>
        <dbReference type="ChEBI" id="CHEBI:49072"/>
        <dbReference type="ChEBI" id="CHEBI:57783"/>
        <dbReference type="ChEBI" id="CHEBI:58349"/>
        <dbReference type="ChEBI" id="CHEBI:58476"/>
        <dbReference type="EC" id="1.1.1.86"/>
    </reaction>
</comment>
<comment type="catalytic activity">
    <reaction evidence="1">
        <text>(2R,3R)-2,3-dihydroxy-3-methylpentanoate + NADP(+) = (S)-2-ethyl-2-hydroxy-3-oxobutanoate + NADPH + H(+)</text>
        <dbReference type="Rhea" id="RHEA:13493"/>
        <dbReference type="ChEBI" id="CHEBI:15378"/>
        <dbReference type="ChEBI" id="CHEBI:49256"/>
        <dbReference type="ChEBI" id="CHEBI:49258"/>
        <dbReference type="ChEBI" id="CHEBI:57783"/>
        <dbReference type="ChEBI" id="CHEBI:58349"/>
        <dbReference type="EC" id="1.1.1.86"/>
    </reaction>
</comment>
<comment type="cofactor">
    <cofactor evidence="1">
        <name>Mg(2+)</name>
        <dbReference type="ChEBI" id="CHEBI:18420"/>
    </cofactor>
    <text evidence="1">Binds 2 magnesium ions per subunit.</text>
</comment>
<comment type="pathway">
    <text evidence="1">Amino-acid biosynthesis; L-isoleucine biosynthesis; L-isoleucine from 2-oxobutanoate: step 2/4.</text>
</comment>
<comment type="pathway">
    <text evidence="1">Amino-acid biosynthesis; L-valine biosynthesis; L-valine from pyruvate: step 2/4.</text>
</comment>
<comment type="similarity">
    <text evidence="1">Belongs to the ketol-acid reductoisomerase family.</text>
</comment>
<evidence type="ECO:0000255" key="1">
    <source>
        <dbReference type="HAMAP-Rule" id="MF_00435"/>
    </source>
</evidence>
<evidence type="ECO:0000255" key="2">
    <source>
        <dbReference type="PROSITE-ProRule" id="PRU01197"/>
    </source>
</evidence>
<evidence type="ECO:0000255" key="3">
    <source>
        <dbReference type="PROSITE-ProRule" id="PRU01198"/>
    </source>
</evidence>
<organism>
    <name type="scientific">Geobacillus sp. (strain WCH70)</name>
    <dbReference type="NCBI Taxonomy" id="471223"/>
    <lineage>
        <taxon>Bacteria</taxon>
        <taxon>Bacillati</taxon>
        <taxon>Bacillota</taxon>
        <taxon>Bacilli</taxon>
        <taxon>Bacillales</taxon>
        <taxon>Anoxybacillaceae</taxon>
        <taxon>Geobacillus</taxon>
    </lineage>
</organism>
<proteinExistence type="inferred from homology"/>
<dbReference type="EC" id="1.1.1.86" evidence="1"/>
<dbReference type="EMBL" id="CP001638">
    <property type="protein sequence ID" value="ACS25289.1"/>
    <property type="molecule type" value="Genomic_DNA"/>
</dbReference>
<dbReference type="SMR" id="C5D5M1"/>
<dbReference type="STRING" id="471223.GWCH70_2594"/>
<dbReference type="KEGG" id="gwc:GWCH70_2594"/>
<dbReference type="eggNOG" id="COG0059">
    <property type="taxonomic scope" value="Bacteria"/>
</dbReference>
<dbReference type="HOGENOM" id="CLU_033821_0_1_9"/>
<dbReference type="OrthoDB" id="9804088at2"/>
<dbReference type="UniPathway" id="UPA00047">
    <property type="reaction ID" value="UER00056"/>
</dbReference>
<dbReference type="UniPathway" id="UPA00049">
    <property type="reaction ID" value="UER00060"/>
</dbReference>
<dbReference type="GO" id="GO:0005829">
    <property type="term" value="C:cytosol"/>
    <property type="evidence" value="ECO:0007669"/>
    <property type="project" value="TreeGrafter"/>
</dbReference>
<dbReference type="GO" id="GO:0004455">
    <property type="term" value="F:ketol-acid reductoisomerase activity"/>
    <property type="evidence" value="ECO:0007669"/>
    <property type="project" value="UniProtKB-UniRule"/>
</dbReference>
<dbReference type="GO" id="GO:0000287">
    <property type="term" value="F:magnesium ion binding"/>
    <property type="evidence" value="ECO:0007669"/>
    <property type="project" value="UniProtKB-UniRule"/>
</dbReference>
<dbReference type="GO" id="GO:0050661">
    <property type="term" value="F:NADP binding"/>
    <property type="evidence" value="ECO:0007669"/>
    <property type="project" value="InterPro"/>
</dbReference>
<dbReference type="GO" id="GO:0009097">
    <property type="term" value="P:isoleucine biosynthetic process"/>
    <property type="evidence" value="ECO:0007669"/>
    <property type="project" value="UniProtKB-UniRule"/>
</dbReference>
<dbReference type="GO" id="GO:0009099">
    <property type="term" value="P:L-valine biosynthetic process"/>
    <property type="evidence" value="ECO:0007669"/>
    <property type="project" value="UniProtKB-UniRule"/>
</dbReference>
<dbReference type="FunFam" id="3.40.50.720:FF:000023">
    <property type="entry name" value="Ketol-acid reductoisomerase (NADP(+))"/>
    <property type="match status" value="1"/>
</dbReference>
<dbReference type="Gene3D" id="6.10.240.10">
    <property type="match status" value="1"/>
</dbReference>
<dbReference type="Gene3D" id="3.40.50.720">
    <property type="entry name" value="NAD(P)-binding Rossmann-like Domain"/>
    <property type="match status" value="1"/>
</dbReference>
<dbReference type="HAMAP" id="MF_00435">
    <property type="entry name" value="IlvC"/>
    <property type="match status" value="1"/>
</dbReference>
<dbReference type="InterPro" id="IPR008927">
    <property type="entry name" value="6-PGluconate_DH-like_C_sf"/>
</dbReference>
<dbReference type="InterPro" id="IPR013023">
    <property type="entry name" value="KARI"/>
</dbReference>
<dbReference type="InterPro" id="IPR000506">
    <property type="entry name" value="KARI_C"/>
</dbReference>
<dbReference type="InterPro" id="IPR013116">
    <property type="entry name" value="KARI_N"/>
</dbReference>
<dbReference type="InterPro" id="IPR014359">
    <property type="entry name" value="KARI_prok"/>
</dbReference>
<dbReference type="InterPro" id="IPR036291">
    <property type="entry name" value="NAD(P)-bd_dom_sf"/>
</dbReference>
<dbReference type="NCBIfam" id="TIGR00465">
    <property type="entry name" value="ilvC"/>
    <property type="match status" value="1"/>
</dbReference>
<dbReference type="NCBIfam" id="NF004017">
    <property type="entry name" value="PRK05479.1"/>
    <property type="match status" value="1"/>
</dbReference>
<dbReference type="NCBIfam" id="NF009940">
    <property type="entry name" value="PRK13403.1"/>
    <property type="match status" value="1"/>
</dbReference>
<dbReference type="PANTHER" id="PTHR21371">
    <property type="entry name" value="KETOL-ACID REDUCTOISOMERASE, MITOCHONDRIAL"/>
    <property type="match status" value="1"/>
</dbReference>
<dbReference type="PANTHER" id="PTHR21371:SF1">
    <property type="entry name" value="KETOL-ACID REDUCTOISOMERASE, MITOCHONDRIAL"/>
    <property type="match status" value="1"/>
</dbReference>
<dbReference type="Pfam" id="PF01450">
    <property type="entry name" value="KARI_C"/>
    <property type="match status" value="1"/>
</dbReference>
<dbReference type="Pfam" id="PF07991">
    <property type="entry name" value="KARI_N"/>
    <property type="match status" value="1"/>
</dbReference>
<dbReference type="PIRSF" id="PIRSF000116">
    <property type="entry name" value="IlvC_gammaproteo"/>
    <property type="match status" value="1"/>
</dbReference>
<dbReference type="SUPFAM" id="SSF48179">
    <property type="entry name" value="6-phosphogluconate dehydrogenase C-terminal domain-like"/>
    <property type="match status" value="1"/>
</dbReference>
<dbReference type="SUPFAM" id="SSF51735">
    <property type="entry name" value="NAD(P)-binding Rossmann-fold domains"/>
    <property type="match status" value="1"/>
</dbReference>
<dbReference type="PROSITE" id="PS51851">
    <property type="entry name" value="KARI_C"/>
    <property type="match status" value="1"/>
</dbReference>
<dbReference type="PROSITE" id="PS51850">
    <property type="entry name" value="KARI_N"/>
    <property type="match status" value="1"/>
</dbReference>
<feature type="chain" id="PRO_1000206083" description="Ketol-acid reductoisomerase (NADP(+))">
    <location>
        <begin position="1"/>
        <end position="341"/>
    </location>
</feature>
<feature type="domain" description="KARI N-terminal Rossmann" evidence="2">
    <location>
        <begin position="2"/>
        <end position="181"/>
    </location>
</feature>
<feature type="domain" description="KARI C-terminal knotted" evidence="3">
    <location>
        <begin position="182"/>
        <end position="327"/>
    </location>
</feature>
<feature type="active site" evidence="1">
    <location>
        <position position="107"/>
    </location>
</feature>
<feature type="binding site" evidence="1">
    <location>
        <begin position="25"/>
        <end position="28"/>
    </location>
    <ligand>
        <name>NADP(+)</name>
        <dbReference type="ChEBI" id="CHEBI:58349"/>
    </ligand>
</feature>
<feature type="binding site" evidence="1">
    <location>
        <position position="48"/>
    </location>
    <ligand>
        <name>NADP(+)</name>
        <dbReference type="ChEBI" id="CHEBI:58349"/>
    </ligand>
</feature>
<feature type="binding site" evidence="1">
    <location>
        <position position="52"/>
    </location>
    <ligand>
        <name>NADP(+)</name>
        <dbReference type="ChEBI" id="CHEBI:58349"/>
    </ligand>
</feature>
<feature type="binding site" evidence="1">
    <location>
        <begin position="82"/>
        <end position="85"/>
    </location>
    <ligand>
        <name>NADP(+)</name>
        <dbReference type="ChEBI" id="CHEBI:58349"/>
    </ligand>
</feature>
<feature type="binding site" evidence="1">
    <location>
        <position position="133"/>
    </location>
    <ligand>
        <name>NADP(+)</name>
        <dbReference type="ChEBI" id="CHEBI:58349"/>
    </ligand>
</feature>
<feature type="binding site" evidence="1">
    <location>
        <position position="190"/>
    </location>
    <ligand>
        <name>Mg(2+)</name>
        <dbReference type="ChEBI" id="CHEBI:18420"/>
        <label>1</label>
    </ligand>
</feature>
<feature type="binding site" evidence="1">
    <location>
        <position position="190"/>
    </location>
    <ligand>
        <name>Mg(2+)</name>
        <dbReference type="ChEBI" id="CHEBI:18420"/>
        <label>2</label>
    </ligand>
</feature>
<feature type="binding site" evidence="1">
    <location>
        <position position="194"/>
    </location>
    <ligand>
        <name>Mg(2+)</name>
        <dbReference type="ChEBI" id="CHEBI:18420"/>
        <label>1</label>
    </ligand>
</feature>
<feature type="binding site" evidence="1">
    <location>
        <position position="226"/>
    </location>
    <ligand>
        <name>Mg(2+)</name>
        <dbReference type="ChEBI" id="CHEBI:18420"/>
        <label>2</label>
    </ligand>
</feature>
<feature type="binding site" evidence="1">
    <location>
        <position position="230"/>
    </location>
    <ligand>
        <name>Mg(2+)</name>
        <dbReference type="ChEBI" id="CHEBI:18420"/>
        <label>2</label>
    </ligand>
</feature>
<feature type="binding site" evidence="1">
    <location>
        <position position="251"/>
    </location>
    <ligand>
        <name>substrate</name>
    </ligand>
</feature>
<name>ILVC_GEOSW</name>
<sequence length="341" mass="37816">MAKVYYNGDANEKYLQSKTVAIIGYGSQGHAHAQNLRDSGVNVIVGLRKGKSWEQAEKDGFAVYSVREATKQADIVMVLLPDEKQPNVYKEEIEPELQPGNALVFAHGFNIHFNQIVPPEHVDVFLVAPKGPGHLVRRTYTEGAGVPALIAVYQDVTGEAKQTALAYAKAIGATRAGVLETTFKEETETDLFGEQAVLCGGLTSLIKAGFETLVEAGYQPEVAYFECLHEMKLIVDLLYEGGLSWMRHSISDTAQWGDFISGPRIINDAVKAEMKKVLHDIQTGKFAKGWILENQANRPEFNAINRRENEHLIEIVGRELRSMMPFVKEKQKEVVVSSAKN</sequence>